<name>RL1_LIBAS</name>
<sequence>MVSKISKRMQQISQGIDRSALYGLSDAVVMLKERATARFDETVEIAMNLGIDPRHANQMVRGVVTMPNGTGVNVRVAVFATSSKADEAREAGADIVGGEDLFEIVKGGQIDFDRCIATPDMMPLVGRLGRILGPRGIMPNLRVGTVTTDVATAVRESKSGAVDFRSEKAGIIHAGIGKVSFENKKIEENVLAFVSAVVKAKPSVAKGDYVKRVTLSSTMGCGIKVDLSSFSV</sequence>
<protein>
    <recommendedName>
        <fullName evidence="1">Large ribosomal subunit protein uL1</fullName>
    </recommendedName>
    <alternativeName>
        <fullName evidence="2">50S ribosomal protein L1</fullName>
    </alternativeName>
</protein>
<gene>
    <name evidence="1" type="primary">rplA</name>
</gene>
<keyword id="KW-0678">Repressor</keyword>
<keyword id="KW-0687">Ribonucleoprotein</keyword>
<keyword id="KW-0689">Ribosomal protein</keyword>
<keyword id="KW-0694">RNA-binding</keyword>
<keyword id="KW-0699">rRNA-binding</keyword>
<keyword id="KW-0810">Translation regulation</keyword>
<keyword id="KW-0820">tRNA-binding</keyword>
<dbReference type="EMBL" id="M94319">
    <property type="protein sequence ID" value="AAA23106.1"/>
    <property type="molecule type" value="Genomic_DNA"/>
</dbReference>
<dbReference type="SMR" id="P36248"/>
<dbReference type="OMA" id="EFRVDKH"/>
<dbReference type="GO" id="GO:0022625">
    <property type="term" value="C:cytosolic large ribosomal subunit"/>
    <property type="evidence" value="ECO:0007669"/>
    <property type="project" value="TreeGrafter"/>
</dbReference>
<dbReference type="GO" id="GO:0019843">
    <property type="term" value="F:rRNA binding"/>
    <property type="evidence" value="ECO:0007669"/>
    <property type="project" value="UniProtKB-UniRule"/>
</dbReference>
<dbReference type="GO" id="GO:0003735">
    <property type="term" value="F:structural constituent of ribosome"/>
    <property type="evidence" value="ECO:0007669"/>
    <property type="project" value="InterPro"/>
</dbReference>
<dbReference type="GO" id="GO:0000049">
    <property type="term" value="F:tRNA binding"/>
    <property type="evidence" value="ECO:0007669"/>
    <property type="project" value="UniProtKB-KW"/>
</dbReference>
<dbReference type="GO" id="GO:0006417">
    <property type="term" value="P:regulation of translation"/>
    <property type="evidence" value="ECO:0007669"/>
    <property type="project" value="UniProtKB-KW"/>
</dbReference>
<dbReference type="GO" id="GO:0006412">
    <property type="term" value="P:translation"/>
    <property type="evidence" value="ECO:0007669"/>
    <property type="project" value="UniProtKB-UniRule"/>
</dbReference>
<dbReference type="CDD" id="cd00403">
    <property type="entry name" value="Ribosomal_L1"/>
    <property type="match status" value="1"/>
</dbReference>
<dbReference type="FunFam" id="3.40.50.790:FF:000001">
    <property type="entry name" value="50S ribosomal protein L1"/>
    <property type="match status" value="1"/>
</dbReference>
<dbReference type="Gene3D" id="3.30.190.20">
    <property type="match status" value="1"/>
</dbReference>
<dbReference type="Gene3D" id="3.40.50.790">
    <property type="match status" value="1"/>
</dbReference>
<dbReference type="HAMAP" id="MF_01318_B">
    <property type="entry name" value="Ribosomal_uL1_B"/>
    <property type="match status" value="1"/>
</dbReference>
<dbReference type="InterPro" id="IPR005878">
    <property type="entry name" value="Ribosom_uL1_bac-type"/>
</dbReference>
<dbReference type="InterPro" id="IPR002143">
    <property type="entry name" value="Ribosomal_uL1"/>
</dbReference>
<dbReference type="InterPro" id="IPR023674">
    <property type="entry name" value="Ribosomal_uL1-like"/>
</dbReference>
<dbReference type="InterPro" id="IPR028364">
    <property type="entry name" value="Ribosomal_uL1/biogenesis"/>
</dbReference>
<dbReference type="InterPro" id="IPR016095">
    <property type="entry name" value="Ribosomal_uL1_3-a/b-sand"/>
</dbReference>
<dbReference type="InterPro" id="IPR023673">
    <property type="entry name" value="Ribosomal_uL1_CS"/>
</dbReference>
<dbReference type="NCBIfam" id="TIGR01169">
    <property type="entry name" value="rplA_bact"/>
    <property type="match status" value="1"/>
</dbReference>
<dbReference type="PANTHER" id="PTHR36427">
    <property type="entry name" value="54S RIBOSOMAL PROTEIN L1, MITOCHONDRIAL"/>
    <property type="match status" value="1"/>
</dbReference>
<dbReference type="PANTHER" id="PTHR36427:SF3">
    <property type="entry name" value="LARGE RIBOSOMAL SUBUNIT PROTEIN UL1M"/>
    <property type="match status" value="1"/>
</dbReference>
<dbReference type="Pfam" id="PF00687">
    <property type="entry name" value="Ribosomal_L1"/>
    <property type="match status" value="1"/>
</dbReference>
<dbReference type="PIRSF" id="PIRSF002155">
    <property type="entry name" value="Ribosomal_L1"/>
    <property type="match status" value="1"/>
</dbReference>
<dbReference type="SUPFAM" id="SSF56808">
    <property type="entry name" value="Ribosomal protein L1"/>
    <property type="match status" value="1"/>
</dbReference>
<dbReference type="PROSITE" id="PS01199">
    <property type="entry name" value="RIBOSOMAL_L1"/>
    <property type="match status" value="1"/>
</dbReference>
<comment type="function">
    <text evidence="1">Binds directly to 23S rRNA. The L1 stalk is quite mobile in the ribosome, and is involved in E site tRNA release.</text>
</comment>
<comment type="function">
    <text evidence="1">Protein L1 is also a translational repressor protein, it controls the translation of the L11 operon by binding to its mRNA.</text>
</comment>
<comment type="subunit">
    <text evidence="1">Part of the 50S ribosomal subunit.</text>
</comment>
<comment type="similarity">
    <text evidence="1">Belongs to the universal ribosomal protein uL1 family.</text>
</comment>
<reference key="1">
    <citation type="journal article" date="1993" name="Curr. Microbiol.">
        <title>The genome of the non-cultured, bacterial-like organism associated with citrus greening disease contains the nusG-rplKAJL-rpoBC gene cluster and the gene for a bacteriophage type DNA polymerase.</title>
        <authorList>
            <person name="Villechanoux S."/>
            <person name="Garnier M."/>
            <person name="Laigret F."/>
            <person name="Renaudin J."/>
            <person name="Bove J.M."/>
        </authorList>
    </citation>
    <scope>NUCLEOTIDE SEQUENCE [GENOMIC DNA]</scope>
</reference>
<proteinExistence type="inferred from homology"/>
<feature type="chain" id="PRO_0000125679" description="Large ribosomal subunit protein uL1">
    <location>
        <begin position="1"/>
        <end position="232"/>
    </location>
</feature>
<accession>P36248</accession>
<organism>
    <name type="scientific">Liberibacter asiaticus</name>
    <name type="common">Citrus greening disease</name>
    <name type="synonym">Liberobacter asiaticum</name>
    <dbReference type="NCBI Taxonomy" id="34021"/>
    <lineage>
        <taxon>Bacteria</taxon>
        <taxon>Pseudomonadati</taxon>
        <taxon>Pseudomonadota</taxon>
        <taxon>Alphaproteobacteria</taxon>
        <taxon>Hyphomicrobiales</taxon>
        <taxon>Rhizobiaceae</taxon>
        <taxon>Liberibacter</taxon>
    </lineage>
</organism>
<evidence type="ECO:0000255" key="1">
    <source>
        <dbReference type="HAMAP-Rule" id="MF_01318"/>
    </source>
</evidence>
<evidence type="ECO:0000305" key="2"/>